<organism>
    <name type="scientific">Streptococcus pyogenes serotype M6 (strain ATCC BAA-946 / MGAS10394)</name>
    <dbReference type="NCBI Taxonomy" id="286636"/>
    <lineage>
        <taxon>Bacteria</taxon>
        <taxon>Bacillati</taxon>
        <taxon>Bacillota</taxon>
        <taxon>Bacilli</taxon>
        <taxon>Lactobacillales</taxon>
        <taxon>Streptococcaceae</taxon>
        <taxon>Streptococcus</taxon>
    </lineage>
</organism>
<keyword id="KW-0227">DNA damage</keyword>
<keyword id="KW-0234">DNA repair</keyword>
<keyword id="KW-0235">DNA replication</keyword>
<keyword id="KW-0436">Ligase</keyword>
<keyword id="KW-0460">Magnesium</keyword>
<keyword id="KW-0464">Manganese</keyword>
<keyword id="KW-0479">Metal-binding</keyword>
<keyword id="KW-0520">NAD</keyword>
<keyword id="KW-0862">Zinc</keyword>
<gene>
    <name evidence="1" type="primary">ligA</name>
    <name type="ordered locus">M6_Spy0590</name>
</gene>
<feature type="chain" id="PRO_0000313466" description="DNA ligase">
    <location>
        <begin position="1"/>
        <end position="652"/>
    </location>
</feature>
<feature type="domain" description="BRCT" evidence="1">
    <location>
        <begin position="577"/>
        <end position="652"/>
    </location>
</feature>
<feature type="active site" description="N6-AMP-lysine intermediate" evidence="1">
    <location>
        <position position="109"/>
    </location>
</feature>
<feature type="binding site" evidence="1">
    <location>
        <begin position="29"/>
        <end position="33"/>
    </location>
    <ligand>
        <name>NAD(+)</name>
        <dbReference type="ChEBI" id="CHEBI:57540"/>
    </ligand>
</feature>
<feature type="binding site" evidence="1">
    <location>
        <begin position="78"/>
        <end position="79"/>
    </location>
    <ligand>
        <name>NAD(+)</name>
        <dbReference type="ChEBI" id="CHEBI:57540"/>
    </ligand>
</feature>
<feature type="binding site" evidence="1">
    <location>
        <position position="107"/>
    </location>
    <ligand>
        <name>NAD(+)</name>
        <dbReference type="ChEBI" id="CHEBI:57540"/>
    </ligand>
</feature>
<feature type="binding site" evidence="1">
    <location>
        <position position="130"/>
    </location>
    <ligand>
        <name>NAD(+)</name>
        <dbReference type="ChEBI" id="CHEBI:57540"/>
    </ligand>
</feature>
<feature type="binding site" evidence="1">
    <location>
        <position position="164"/>
    </location>
    <ligand>
        <name>NAD(+)</name>
        <dbReference type="ChEBI" id="CHEBI:57540"/>
    </ligand>
</feature>
<feature type="binding site" evidence="1">
    <location>
        <position position="278"/>
    </location>
    <ligand>
        <name>NAD(+)</name>
        <dbReference type="ChEBI" id="CHEBI:57540"/>
    </ligand>
</feature>
<feature type="binding site" evidence="1">
    <location>
        <position position="302"/>
    </location>
    <ligand>
        <name>NAD(+)</name>
        <dbReference type="ChEBI" id="CHEBI:57540"/>
    </ligand>
</feature>
<feature type="binding site" evidence="1">
    <location>
        <position position="395"/>
    </location>
    <ligand>
        <name>Zn(2+)</name>
        <dbReference type="ChEBI" id="CHEBI:29105"/>
    </ligand>
</feature>
<feature type="binding site" evidence="1">
    <location>
        <position position="398"/>
    </location>
    <ligand>
        <name>Zn(2+)</name>
        <dbReference type="ChEBI" id="CHEBI:29105"/>
    </ligand>
</feature>
<feature type="binding site" evidence="1">
    <location>
        <position position="413"/>
    </location>
    <ligand>
        <name>Zn(2+)</name>
        <dbReference type="ChEBI" id="CHEBI:29105"/>
    </ligand>
</feature>
<feature type="binding site" evidence="1">
    <location>
        <position position="418"/>
    </location>
    <ligand>
        <name>Zn(2+)</name>
        <dbReference type="ChEBI" id="CHEBI:29105"/>
    </ligand>
</feature>
<accession>Q5XCY8</accession>
<sequence>MKKRIKELTDLLNRYRYDYYTKDAPSVSDSDYDKLYRELVTLEQSYPEYVLQDSPTQQVGGTILKGFEKYRHQYPLFSLQDAFSREELDAFDKRVKAEFPNATYLAELKIDGLSISLSYENGFLQVGATRGDGNIGENITENIKKIKDIPHQLSEPLTITVRGEAYMSRQSFKAINEARQENGETEFANPRNAAAGTLRQLDTSVVAKRQLATFLYQEASPTARNQQNEVLAELADLGFSVNPYYQLTSSMDEIWDFIKTIEAKRDQLAYDIDGVVIKVNSLAMQEELGFTVKAPRWAIAYKFPAEEKEAEILSVDWTVGRTGVVTPTANLTPVQLAGTTVSRATLHNVDYIAEKDIRIGDTVIVYKAGDIIPAVLNVVMSKRNQQEVMLIPKLCPSCGSELVHFEDEVALRCINPLCPSLIQRSLEHFASRDAMNITGLGPAIVEKLFLAGFVHDVADIYQLTKEDFMQLDGIKEKSADKLLAAIEASKSNSAEKLLFGLGIRHIGSKVSRLILEVYGDISALLTAKEEEIARIDGLGSTIAQSLTQYFEQKTAAILVDELKTAGVNMHYSGQKVNSDAALFGLTVVLTGKLNQLNRNEAKDKLEALGAKVTGSVSKKTDLVIAGSDAGSKLEKAKSLGIRIEDEDWLRKF</sequence>
<reference key="1">
    <citation type="journal article" date="2004" name="J. Infect. Dis.">
        <title>Progress toward characterization of the group A Streptococcus metagenome: complete genome sequence of a macrolide-resistant serotype M6 strain.</title>
        <authorList>
            <person name="Banks D.J."/>
            <person name="Porcella S.F."/>
            <person name="Barbian K.D."/>
            <person name="Beres S.B."/>
            <person name="Philips L.E."/>
            <person name="Voyich J.M."/>
            <person name="DeLeo F.R."/>
            <person name="Martin J.M."/>
            <person name="Somerville G.A."/>
            <person name="Musser J.M."/>
        </authorList>
    </citation>
    <scope>NUCLEOTIDE SEQUENCE [LARGE SCALE GENOMIC DNA]</scope>
    <source>
        <strain>ATCC BAA-946 / MGAS10394</strain>
    </source>
</reference>
<comment type="function">
    <text evidence="1">DNA ligase that catalyzes the formation of phosphodiester linkages between 5'-phosphoryl and 3'-hydroxyl groups in double-stranded DNA using NAD as a coenzyme and as the energy source for the reaction. It is essential for DNA replication and repair of damaged DNA.</text>
</comment>
<comment type="catalytic activity">
    <reaction evidence="1">
        <text>NAD(+) + (deoxyribonucleotide)n-3'-hydroxyl + 5'-phospho-(deoxyribonucleotide)m = (deoxyribonucleotide)n+m + AMP + beta-nicotinamide D-nucleotide.</text>
        <dbReference type="EC" id="6.5.1.2"/>
    </reaction>
</comment>
<comment type="cofactor">
    <cofactor evidence="1">
        <name>Mg(2+)</name>
        <dbReference type="ChEBI" id="CHEBI:18420"/>
    </cofactor>
    <cofactor evidence="1">
        <name>Mn(2+)</name>
        <dbReference type="ChEBI" id="CHEBI:29035"/>
    </cofactor>
</comment>
<comment type="similarity">
    <text evidence="1">Belongs to the NAD-dependent DNA ligase family. LigA subfamily.</text>
</comment>
<dbReference type="EC" id="6.5.1.2" evidence="1"/>
<dbReference type="EMBL" id="CP000003">
    <property type="protein sequence ID" value="AAT86725.1"/>
    <property type="molecule type" value="Genomic_DNA"/>
</dbReference>
<dbReference type="RefSeq" id="WP_011184361.1">
    <property type="nucleotide sequence ID" value="NC_006086.1"/>
</dbReference>
<dbReference type="SMR" id="Q5XCY8"/>
<dbReference type="KEGG" id="spa:M6_Spy0590"/>
<dbReference type="HOGENOM" id="CLU_007764_2_1_9"/>
<dbReference type="Proteomes" id="UP000001167">
    <property type="component" value="Chromosome"/>
</dbReference>
<dbReference type="GO" id="GO:0005829">
    <property type="term" value="C:cytosol"/>
    <property type="evidence" value="ECO:0007669"/>
    <property type="project" value="TreeGrafter"/>
</dbReference>
<dbReference type="GO" id="GO:0003677">
    <property type="term" value="F:DNA binding"/>
    <property type="evidence" value="ECO:0007669"/>
    <property type="project" value="InterPro"/>
</dbReference>
<dbReference type="GO" id="GO:0003911">
    <property type="term" value="F:DNA ligase (NAD+) activity"/>
    <property type="evidence" value="ECO:0007669"/>
    <property type="project" value="UniProtKB-UniRule"/>
</dbReference>
<dbReference type="GO" id="GO:0046872">
    <property type="term" value="F:metal ion binding"/>
    <property type="evidence" value="ECO:0007669"/>
    <property type="project" value="UniProtKB-KW"/>
</dbReference>
<dbReference type="GO" id="GO:0006281">
    <property type="term" value="P:DNA repair"/>
    <property type="evidence" value="ECO:0007669"/>
    <property type="project" value="UniProtKB-KW"/>
</dbReference>
<dbReference type="GO" id="GO:0006260">
    <property type="term" value="P:DNA replication"/>
    <property type="evidence" value="ECO:0007669"/>
    <property type="project" value="UniProtKB-KW"/>
</dbReference>
<dbReference type="CDD" id="cd17748">
    <property type="entry name" value="BRCT_DNA_ligase_like"/>
    <property type="match status" value="1"/>
</dbReference>
<dbReference type="CDD" id="cd00114">
    <property type="entry name" value="LIGANc"/>
    <property type="match status" value="1"/>
</dbReference>
<dbReference type="FunFam" id="1.10.150.20:FF:000007">
    <property type="entry name" value="DNA ligase"/>
    <property type="match status" value="1"/>
</dbReference>
<dbReference type="FunFam" id="1.10.287.610:FF:000002">
    <property type="entry name" value="DNA ligase"/>
    <property type="match status" value="1"/>
</dbReference>
<dbReference type="FunFam" id="2.40.50.140:FF:000012">
    <property type="entry name" value="DNA ligase"/>
    <property type="match status" value="1"/>
</dbReference>
<dbReference type="FunFam" id="3.30.470.30:FF:000001">
    <property type="entry name" value="DNA ligase"/>
    <property type="match status" value="1"/>
</dbReference>
<dbReference type="Gene3D" id="6.20.10.30">
    <property type="match status" value="1"/>
</dbReference>
<dbReference type="Gene3D" id="1.10.150.20">
    <property type="entry name" value="5' to 3' exonuclease, C-terminal subdomain"/>
    <property type="match status" value="2"/>
</dbReference>
<dbReference type="Gene3D" id="3.40.50.10190">
    <property type="entry name" value="BRCT domain"/>
    <property type="match status" value="1"/>
</dbReference>
<dbReference type="Gene3D" id="3.30.470.30">
    <property type="entry name" value="DNA ligase/mRNA capping enzyme"/>
    <property type="match status" value="1"/>
</dbReference>
<dbReference type="Gene3D" id="1.10.287.610">
    <property type="entry name" value="Helix hairpin bin"/>
    <property type="match status" value="1"/>
</dbReference>
<dbReference type="Gene3D" id="2.40.50.140">
    <property type="entry name" value="Nucleic acid-binding proteins"/>
    <property type="match status" value="1"/>
</dbReference>
<dbReference type="HAMAP" id="MF_01588">
    <property type="entry name" value="DNA_ligase_A"/>
    <property type="match status" value="1"/>
</dbReference>
<dbReference type="InterPro" id="IPR001357">
    <property type="entry name" value="BRCT_dom"/>
</dbReference>
<dbReference type="InterPro" id="IPR036420">
    <property type="entry name" value="BRCT_dom_sf"/>
</dbReference>
<dbReference type="InterPro" id="IPR041663">
    <property type="entry name" value="DisA/LigA_HHH"/>
</dbReference>
<dbReference type="InterPro" id="IPR001679">
    <property type="entry name" value="DNA_ligase"/>
</dbReference>
<dbReference type="InterPro" id="IPR018239">
    <property type="entry name" value="DNA_ligase_AS"/>
</dbReference>
<dbReference type="InterPro" id="IPR033136">
    <property type="entry name" value="DNA_ligase_CS"/>
</dbReference>
<dbReference type="InterPro" id="IPR013839">
    <property type="entry name" value="DNAligase_adenylation"/>
</dbReference>
<dbReference type="InterPro" id="IPR013840">
    <property type="entry name" value="DNAligase_N"/>
</dbReference>
<dbReference type="InterPro" id="IPR003583">
    <property type="entry name" value="Hlx-hairpin-Hlx_DNA-bd_motif"/>
</dbReference>
<dbReference type="InterPro" id="IPR012340">
    <property type="entry name" value="NA-bd_OB-fold"/>
</dbReference>
<dbReference type="InterPro" id="IPR004150">
    <property type="entry name" value="NAD_DNA_ligase_OB"/>
</dbReference>
<dbReference type="InterPro" id="IPR010994">
    <property type="entry name" value="RuvA_2-like"/>
</dbReference>
<dbReference type="InterPro" id="IPR004149">
    <property type="entry name" value="Znf_DNAligase_C4"/>
</dbReference>
<dbReference type="NCBIfam" id="TIGR00575">
    <property type="entry name" value="dnlj"/>
    <property type="match status" value="1"/>
</dbReference>
<dbReference type="NCBIfam" id="NF005932">
    <property type="entry name" value="PRK07956.1"/>
    <property type="match status" value="1"/>
</dbReference>
<dbReference type="PANTHER" id="PTHR23389">
    <property type="entry name" value="CHROMOSOME TRANSMISSION FIDELITY FACTOR 18"/>
    <property type="match status" value="1"/>
</dbReference>
<dbReference type="PANTHER" id="PTHR23389:SF9">
    <property type="entry name" value="DNA LIGASE"/>
    <property type="match status" value="1"/>
</dbReference>
<dbReference type="Pfam" id="PF00533">
    <property type="entry name" value="BRCT"/>
    <property type="match status" value="1"/>
</dbReference>
<dbReference type="Pfam" id="PF01653">
    <property type="entry name" value="DNA_ligase_aden"/>
    <property type="match status" value="1"/>
</dbReference>
<dbReference type="Pfam" id="PF03120">
    <property type="entry name" value="DNA_ligase_OB"/>
    <property type="match status" value="1"/>
</dbReference>
<dbReference type="Pfam" id="PF03119">
    <property type="entry name" value="DNA_ligase_ZBD"/>
    <property type="match status" value="1"/>
</dbReference>
<dbReference type="Pfam" id="PF12826">
    <property type="entry name" value="HHH_2"/>
    <property type="match status" value="1"/>
</dbReference>
<dbReference type="Pfam" id="PF14520">
    <property type="entry name" value="HHH_5"/>
    <property type="match status" value="1"/>
</dbReference>
<dbReference type="PIRSF" id="PIRSF001604">
    <property type="entry name" value="LigA"/>
    <property type="match status" value="1"/>
</dbReference>
<dbReference type="SMART" id="SM00292">
    <property type="entry name" value="BRCT"/>
    <property type="match status" value="1"/>
</dbReference>
<dbReference type="SMART" id="SM00278">
    <property type="entry name" value="HhH1"/>
    <property type="match status" value="3"/>
</dbReference>
<dbReference type="SMART" id="SM00532">
    <property type="entry name" value="LIGANc"/>
    <property type="match status" value="1"/>
</dbReference>
<dbReference type="SUPFAM" id="SSF52113">
    <property type="entry name" value="BRCT domain"/>
    <property type="match status" value="1"/>
</dbReference>
<dbReference type="SUPFAM" id="SSF56091">
    <property type="entry name" value="DNA ligase/mRNA capping enzyme, catalytic domain"/>
    <property type="match status" value="1"/>
</dbReference>
<dbReference type="SUPFAM" id="SSF50249">
    <property type="entry name" value="Nucleic acid-binding proteins"/>
    <property type="match status" value="1"/>
</dbReference>
<dbReference type="SUPFAM" id="SSF47781">
    <property type="entry name" value="RuvA domain 2-like"/>
    <property type="match status" value="1"/>
</dbReference>
<dbReference type="PROSITE" id="PS50172">
    <property type="entry name" value="BRCT"/>
    <property type="match status" value="1"/>
</dbReference>
<dbReference type="PROSITE" id="PS01055">
    <property type="entry name" value="DNA_LIGASE_N1"/>
    <property type="match status" value="1"/>
</dbReference>
<dbReference type="PROSITE" id="PS01056">
    <property type="entry name" value="DNA_LIGASE_N2"/>
    <property type="match status" value="1"/>
</dbReference>
<evidence type="ECO:0000255" key="1">
    <source>
        <dbReference type="HAMAP-Rule" id="MF_01588"/>
    </source>
</evidence>
<name>DNLJ_STRP6</name>
<protein>
    <recommendedName>
        <fullName evidence="1">DNA ligase</fullName>
        <ecNumber evidence="1">6.5.1.2</ecNumber>
    </recommendedName>
    <alternativeName>
        <fullName evidence="1">Polydeoxyribonucleotide synthase [NAD(+)]</fullName>
    </alternativeName>
</protein>
<proteinExistence type="inferred from homology"/>